<name>RS6_THEFY</name>
<gene>
    <name evidence="1" type="primary">rpsF</name>
    <name type="ordered locus">Tfu_3095</name>
</gene>
<reference key="1">
    <citation type="journal article" date="2007" name="J. Bacteriol.">
        <title>Genome sequence and analysis of the soil cellulolytic actinomycete Thermobifida fusca YX.</title>
        <authorList>
            <person name="Lykidis A."/>
            <person name="Mavromatis K."/>
            <person name="Ivanova N."/>
            <person name="Anderson I."/>
            <person name="Land M."/>
            <person name="DiBartolo G."/>
            <person name="Martinez M."/>
            <person name="Lapidus A."/>
            <person name="Lucas S."/>
            <person name="Copeland A."/>
            <person name="Richardson P."/>
            <person name="Wilson D.B."/>
            <person name="Kyrpides N."/>
        </authorList>
    </citation>
    <scope>NUCLEOTIDE SEQUENCE [LARGE SCALE GENOMIC DNA]</scope>
    <source>
        <strain>YX</strain>
    </source>
</reference>
<evidence type="ECO:0000255" key="1">
    <source>
        <dbReference type="HAMAP-Rule" id="MF_00360"/>
    </source>
</evidence>
<evidence type="ECO:0000305" key="2"/>
<keyword id="KW-0687">Ribonucleoprotein</keyword>
<keyword id="KW-0689">Ribosomal protein</keyword>
<keyword id="KW-0694">RNA-binding</keyword>
<keyword id="KW-0699">rRNA-binding</keyword>
<accession>Q47K94</accession>
<proteinExistence type="inferred from homology"/>
<sequence>MRRYEVMIILDPTLDERTVAPSLEQFLSVVRNEGGSVEKVDVWGKRRLAYDIGKNSEGIYAVIDLTAKPSTVHELDRQLNLTEAVLRTKVLRPEIH</sequence>
<comment type="function">
    <text evidence="1">Binds together with bS18 to 16S ribosomal RNA.</text>
</comment>
<comment type="similarity">
    <text evidence="1">Belongs to the bacterial ribosomal protein bS6 family.</text>
</comment>
<organism>
    <name type="scientific">Thermobifida fusca (strain YX)</name>
    <dbReference type="NCBI Taxonomy" id="269800"/>
    <lineage>
        <taxon>Bacteria</taxon>
        <taxon>Bacillati</taxon>
        <taxon>Actinomycetota</taxon>
        <taxon>Actinomycetes</taxon>
        <taxon>Streptosporangiales</taxon>
        <taxon>Nocardiopsidaceae</taxon>
        <taxon>Thermobifida</taxon>
    </lineage>
</organism>
<protein>
    <recommendedName>
        <fullName evidence="1">Small ribosomal subunit protein bS6</fullName>
    </recommendedName>
    <alternativeName>
        <fullName evidence="2">30S ribosomal protein S6</fullName>
    </alternativeName>
</protein>
<feature type="chain" id="PRO_0000229585" description="Small ribosomal subunit protein bS6">
    <location>
        <begin position="1"/>
        <end position="96"/>
    </location>
</feature>
<dbReference type="EMBL" id="CP000088">
    <property type="protein sequence ID" value="AAZ57128.1"/>
    <property type="molecule type" value="Genomic_DNA"/>
</dbReference>
<dbReference type="RefSeq" id="WP_011293512.1">
    <property type="nucleotide sequence ID" value="NC_007333.1"/>
</dbReference>
<dbReference type="SMR" id="Q47K94"/>
<dbReference type="STRING" id="269800.Tfu_3095"/>
<dbReference type="KEGG" id="tfu:Tfu_3095"/>
<dbReference type="eggNOG" id="COG0360">
    <property type="taxonomic scope" value="Bacteria"/>
</dbReference>
<dbReference type="HOGENOM" id="CLU_113441_5_3_11"/>
<dbReference type="OrthoDB" id="9812702at2"/>
<dbReference type="GO" id="GO:0005737">
    <property type="term" value="C:cytoplasm"/>
    <property type="evidence" value="ECO:0007669"/>
    <property type="project" value="UniProtKB-ARBA"/>
</dbReference>
<dbReference type="GO" id="GO:1990904">
    <property type="term" value="C:ribonucleoprotein complex"/>
    <property type="evidence" value="ECO:0007669"/>
    <property type="project" value="UniProtKB-KW"/>
</dbReference>
<dbReference type="GO" id="GO:0005840">
    <property type="term" value="C:ribosome"/>
    <property type="evidence" value="ECO:0007669"/>
    <property type="project" value="UniProtKB-KW"/>
</dbReference>
<dbReference type="GO" id="GO:0070181">
    <property type="term" value="F:small ribosomal subunit rRNA binding"/>
    <property type="evidence" value="ECO:0007669"/>
    <property type="project" value="TreeGrafter"/>
</dbReference>
<dbReference type="GO" id="GO:0003735">
    <property type="term" value="F:structural constituent of ribosome"/>
    <property type="evidence" value="ECO:0007669"/>
    <property type="project" value="InterPro"/>
</dbReference>
<dbReference type="GO" id="GO:0006412">
    <property type="term" value="P:translation"/>
    <property type="evidence" value="ECO:0007669"/>
    <property type="project" value="UniProtKB-UniRule"/>
</dbReference>
<dbReference type="CDD" id="cd00473">
    <property type="entry name" value="bS6"/>
    <property type="match status" value="1"/>
</dbReference>
<dbReference type="FunFam" id="3.30.70.60:FF:000002">
    <property type="entry name" value="30S ribosomal protein S6"/>
    <property type="match status" value="1"/>
</dbReference>
<dbReference type="Gene3D" id="3.30.70.60">
    <property type="match status" value="1"/>
</dbReference>
<dbReference type="HAMAP" id="MF_00360">
    <property type="entry name" value="Ribosomal_bS6"/>
    <property type="match status" value="1"/>
</dbReference>
<dbReference type="InterPro" id="IPR000529">
    <property type="entry name" value="Ribosomal_bS6"/>
</dbReference>
<dbReference type="InterPro" id="IPR035980">
    <property type="entry name" value="Ribosomal_bS6_sf"/>
</dbReference>
<dbReference type="InterPro" id="IPR020814">
    <property type="entry name" value="Ribosomal_S6_plastid/chlpt"/>
</dbReference>
<dbReference type="InterPro" id="IPR014717">
    <property type="entry name" value="Transl_elong_EF1B/ribsomal_bS6"/>
</dbReference>
<dbReference type="NCBIfam" id="TIGR00166">
    <property type="entry name" value="S6"/>
    <property type="match status" value="1"/>
</dbReference>
<dbReference type="PANTHER" id="PTHR21011">
    <property type="entry name" value="MITOCHONDRIAL 28S RIBOSOMAL PROTEIN S6"/>
    <property type="match status" value="1"/>
</dbReference>
<dbReference type="PANTHER" id="PTHR21011:SF1">
    <property type="entry name" value="SMALL RIBOSOMAL SUBUNIT PROTEIN BS6M"/>
    <property type="match status" value="1"/>
</dbReference>
<dbReference type="Pfam" id="PF01250">
    <property type="entry name" value="Ribosomal_S6"/>
    <property type="match status" value="1"/>
</dbReference>
<dbReference type="SUPFAM" id="SSF54995">
    <property type="entry name" value="Ribosomal protein S6"/>
    <property type="match status" value="1"/>
</dbReference>